<organism>
    <name type="scientific">Francisella tularensis subsp. tularensis (strain FSC 198)</name>
    <dbReference type="NCBI Taxonomy" id="393115"/>
    <lineage>
        <taxon>Bacteria</taxon>
        <taxon>Pseudomonadati</taxon>
        <taxon>Pseudomonadota</taxon>
        <taxon>Gammaproteobacteria</taxon>
        <taxon>Thiotrichales</taxon>
        <taxon>Francisellaceae</taxon>
        <taxon>Francisella</taxon>
    </lineage>
</organism>
<feature type="chain" id="PRO_1000056248" description="Ubiquinone/menaquinone biosynthesis C-methyltransferase UbiE">
    <location>
        <begin position="1"/>
        <end position="250"/>
    </location>
</feature>
<feature type="binding site" evidence="1">
    <location>
        <position position="73"/>
    </location>
    <ligand>
        <name>S-adenosyl-L-methionine</name>
        <dbReference type="ChEBI" id="CHEBI:59789"/>
    </ligand>
</feature>
<feature type="binding site" evidence="1">
    <location>
        <position position="94"/>
    </location>
    <ligand>
        <name>S-adenosyl-L-methionine</name>
        <dbReference type="ChEBI" id="CHEBI:59789"/>
    </ligand>
</feature>
<feature type="binding site" evidence="1">
    <location>
        <begin position="122"/>
        <end position="123"/>
    </location>
    <ligand>
        <name>S-adenosyl-L-methionine</name>
        <dbReference type="ChEBI" id="CHEBI:59789"/>
    </ligand>
</feature>
<feature type="binding site" evidence="1">
    <location>
        <position position="139"/>
    </location>
    <ligand>
        <name>S-adenosyl-L-methionine</name>
        <dbReference type="ChEBI" id="CHEBI:59789"/>
    </ligand>
</feature>
<gene>
    <name evidence="1" type="primary">ubiE</name>
    <name type="ordered locus">FTF1296</name>
</gene>
<keyword id="KW-0474">Menaquinone biosynthesis</keyword>
<keyword id="KW-0489">Methyltransferase</keyword>
<keyword id="KW-0949">S-adenosyl-L-methionine</keyword>
<keyword id="KW-0808">Transferase</keyword>
<keyword id="KW-0831">Ubiquinone biosynthesis</keyword>
<evidence type="ECO:0000255" key="1">
    <source>
        <dbReference type="HAMAP-Rule" id="MF_01813"/>
    </source>
</evidence>
<sequence length="250" mass="28031">MSKENKTTDFGFTQVPWEEKQKKVAGVFHSVAAKYDLMNDLMSFGIHRIWKKQTIAKSGVRKGDNVLDLAGGTGDLAYKFCQMVGQQGKVILSDINSSMLEVGKEKLTNKGCVGNIEYVQANAECLPFPDNYFDCITISFGLRNVTDKDKALASMCRVLKPGGRSLVLEFSKPIIPLLSKVYDEYSFKALPFLGKIITQDAESYKYLAESIRKHPDQQTLKQMMYDAGFDNVEYQNMTGGIVALHIGYKY</sequence>
<accession>Q14GU4</accession>
<reference key="1">
    <citation type="journal article" date="2007" name="PLoS ONE">
        <title>Genome sequencing shows that European isolates of Francisella tularensis subspecies tularensis are almost identical to US laboratory strain Schu S4.</title>
        <authorList>
            <person name="Chaudhuri R.R."/>
            <person name="Ren C.-P."/>
            <person name="Desmond L."/>
            <person name="Vincent G.A."/>
            <person name="Silman N.J."/>
            <person name="Brehm J.K."/>
            <person name="Elmore M.J."/>
            <person name="Hudson M.J."/>
            <person name="Forsman M."/>
            <person name="Isherwood K.E."/>
            <person name="Gurycova D."/>
            <person name="Minton N.P."/>
            <person name="Titball R.W."/>
            <person name="Pallen M.J."/>
            <person name="Vipond R."/>
        </authorList>
    </citation>
    <scope>NUCLEOTIDE SEQUENCE [LARGE SCALE GENOMIC DNA]</scope>
    <source>
        <strain>FSC 198</strain>
    </source>
</reference>
<protein>
    <recommendedName>
        <fullName evidence="1">Ubiquinone/menaquinone biosynthesis C-methyltransferase UbiE</fullName>
        <ecNumber evidence="1">2.1.1.163</ecNumber>
        <ecNumber evidence="1">2.1.1.201</ecNumber>
    </recommendedName>
    <alternativeName>
        <fullName evidence="1">2-methoxy-6-polyprenyl-1,4-benzoquinol methylase</fullName>
    </alternativeName>
    <alternativeName>
        <fullName evidence="1">Demethylmenaquinone methyltransferase</fullName>
    </alternativeName>
</protein>
<comment type="function">
    <text evidence="1">Methyltransferase required for the conversion of demethylmenaquinol (DMKH2) to menaquinol (MKH2) and the conversion of 2-polyprenyl-6-methoxy-1,4-benzoquinol (DDMQH2) to 2-polyprenyl-3-methyl-6-methoxy-1,4-benzoquinol (DMQH2).</text>
</comment>
<comment type="catalytic activity">
    <reaction evidence="1">
        <text>a 2-demethylmenaquinol + S-adenosyl-L-methionine = a menaquinol + S-adenosyl-L-homocysteine + H(+)</text>
        <dbReference type="Rhea" id="RHEA:42640"/>
        <dbReference type="Rhea" id="RHEA-COMP:9539"/>
        <dbReference type="Rhea" id="RHEA-COMP:9563"/>
        <dbReference type="ChEBI" id="CHEBI:15378"/>
        <dbReference type="ChEBI" id="CHEBI:18151"/>
        <dbReference type="ChEBI" id="CHEBI:55437"/>
        <dbReference type="ChEBI" id="CHEBI:57856"/>
        <dbReference type="ChEBI" id="CHEBI:59789"/>
        <dbReference type="EC" id="2.1.1.163"/>
    </reaction>
</comment>
<comment type="catalytic activity">
    <reaction evidence="1">
        <text>a 2-methoxy-6-(all-trans-polyprenyl)benzene-1,4-diol + S-adenosyl-L-methionine = a 5-methoxy-2-methyl-3-(all-trans-polyprenyl)benzene-1,4-diol + S-adenosyl-L-homocysteine + H(+)</text>
        <dbReference type="Rhea" id="RHEA:28286"/>
        <dbReference type="Rhea" id="RHEA-COMP:10858"/>
        <dbReference type="Rhea" id="RHEA-COMP:10859"/>
        <dbReference type="ChEBI" id="CHEBI:15378"/>
        <dbReference type="ChEBI" id="CHEBI:57856"/>
        <dbReference type="ChEBI" id="CHEBI:59789"/>
        <dbReference type="ChEBI" id="CHEBI:84166"/>
        <dbReference type="ChEBI" id="CHEBI:84167"/>
        <dbReference type="EC" id="2.1.1.201"/>
    </reaction>
</comment>
<comment type="pathway">
    <text evidence="1">Quinol/quinone metabolism; menaquinone biosynthesis; menaquinol from 1,4-dihydroxy-2-naphthoate: step 2/2.</text>
</comment>
<comment type="pathway">
    <text evidence="1">Cofactor biosynthesis; ubiquinone biosynthesis.</text>
</comment>
<comment type="similarity">
    <text evidence="1">Belongs to the class I-like SAM-binding methyltransferase superfamily. MenG/UbiE family.</text>
</comment>
<proteinExistence type="inferred from homology"/>
<name>UBIE_FRAT1</name>
<dbReference type="EC" id="2.1.1.163" evidence="1"/>
<dbReference type="EC" id="2.1.1.201" evidence="1"/>
<dbReference type="EMBL" id="AM286280">
    <property type="protein sequence ID" value="CAL09312.1"/>
    <property type="molecule type" value="Genomic_DNA"/>
</dbReference>
<dbReference type="RefSeq" id="WP_003022004.1">
    <property type="nucleotide sequence ID" value="NC_008245.1"/>
</dbReference>
<dbReference type="SMR" id="Q14GU4"/>
<dbReference type="KEGG" id="ftf:FTF1296"/>
<dbReference type="HOGENOM" id="CLU_037990_0_0_6"/>
<dbReference type="UniPathway" id="UPA00079">
    <property type="reaction ID" value="UER00169"/>
</dbReference>
<dbReference type="UniPathway" id="UPA00232"/>
<dbReference type="GO" id="GO:0008425">
    <property type="term" value="F:2-methoxy-6-polyprenyl-1,4-benzoquinol methyltransferase activity"/>
    <property type="evidence" value="ECO:0007669"/>
    <property type="project" value="UniProtKB-UniRule"/>
</dbReference>
<dbReference type="GO" id="GO:0043770">
    <property type="term" value="F:demethylmenaquinone methyltransferase activity"/>
    <property type="evidence" value="ECO:0007669"/>
    <property type="project" value="UniProtKB-UniRule"/>
</dbReference>
<dbReference type="GO" id="GO:0009060">
    <property type="term" value="P:aerobic respiration"/>
    <property type="evidence" value="ECO:0007669"/>
    <property type="project" value="UniProtKB-UniRule"/>
</dbReference>
<dbReference type="GO" id="GO:0009234">
    <property type="term" value="P:menaquinone biosynthetic process"/>
    <property type="evidence" value="ECO:0007669"/>
    <property type="project" value="UniProtKB-UniRule"/>
</dbReference>
<dbReference type="GO" id="GO:0032259">
    <property type="term" value="P:methylation"/>
    <property type="evidence" value="ECO:0007669"/>
    <property type="project" value="UniProtKB-KW"/>
</dbReference>
<dbReference type="CDD" id="cd02440">
    <property type="entry name" value="AdoMet_MTases"/>
    <property type="match status" value="1"/>
</dbReference>
<dbReference type="FunFam" id="3.40.50.150:FF:000014">
    <property type="entry name" value="Ubiquinone/menaquinone biosynthesis C-methyltransferase UbiE"/>
    <property type="match status" value="1"/>
</dbReference>
<dbReference type="Gene3D" id="3.40.50.150">
    <property type="entry name" value="Vaccinia Virus protein VP39"/>
    <property type="match status" value="1"/>
</dbReference>
<dbReference type="HAMAP" id="MF_01813">
    <property type="entry name" value="MenG_UbiE_methyltr"/>
    <property type="match status" value="1"/>
</dbReference>
<dbReference type="InterPro" id="IPR029063">
    <property type="entry name" value="SAM-dependent_MTases_sf"/>
</dbReference>
<dbReference type="InterPro" id="IPR004033">
    <property type="entry name" value="UbiE/COQ5_MeTrFase"/>
</dbReference>
<dbReference type="InterPro" id="IPR023576">
    <property type="entry name" value="UbiE/COQ5_MeTrFase_CS"/>
</dbReference>
<dbReference type="NCBIfam" id="TIGR01934">
    <property type="entry name" value="MenG_MenH_UbiE"/>
    <property type="match status" value="1"/>
</dbReference>
<dbReference type="NCBIfam" id="NF001240">
    <property type="entry name" value="PRK00216.1-1"/>
    <property type="match status" value="1"/>
</dbReference>
<dbReference type="NCBIfam" id="NF001242">
    <property type="entry name" value="PRK00216.1-3"/>
    <property type="match status" value="1"/>
</dbReference>
<dbReference type="NCBIfam" id="NF001244">
    <property type="entry name" value="PRK00216.1-5"/>
    <property type="match status" value="1"/>
</dbReference>
<dbReference type="PANTHER" id="PTHR43591:SF24">
    <property type="entry name" value="2-METHOXY-6-POLYPRENYL-1,4-BENZOQUINOL METHYLASE, MITOCHONDRIAL"/>
    <property type="match status" value="1"/>
</dbReference>
<dbReference type="PANTHER" id="PTHR43591">
    <property type="entry name" value="METHYLTRANSFERASE"/>
    <property type="match status" value="1"/>
</dbReference>
<dbReference type="Pfam" id="PF01209">
    <property type="entry name" value="Ubie_methyltran"/>
    <property type="match status" value="1"/>
</dbReference>
<dbReference type="SUPFAM" id="SSF53335">
    <property type="entry name" value="S-adenosyl-L-methionine-dependent methyltransferases"/>
    <property type="match status" value="1"/>
</dbReference>
<dbReference type="PROSITE" id="PS51608">
    <property type="entry name" value="SAM_MT_UBIE"/>
    <property type="match status" value="1"/>
</dbReference>
<dbReference type="PROSITE" id="PS01183">
    <property type="entry name" value="UBIE_1"/>
    <property type="match status" value="1"/>
</dbReference>